<evidence type="ECO:0000255" key="1">
    <source>
        <dbReference type="PROSITE-ProRule" id="PRU00465"/>
    </source>
</evidence>
<evidence type="ECO:0000305" key="2"/>
<feature type="chain" id="PRO_0000189391" description="Ferredoxin, plant-type">
    <location>
        <begin position="1"/>
        <end position="112"/>
    </location>
</feature>
<feature type="domain" description="2Fe-2S ferredoxin-type" evidence="1">
    <location>
        <begin position="6"/>
        <end position="97"/>
    </location>
</feature>
<feature type="binding site" evidence="1">
    <location>
        <position position="41"/>
    </location>
    <ligand>
        <name>[2Fe-2S] cluster</name>
        <dbReference type="ChEBI" id="CHEBI:190135"/>
    </ligand>
</feature>
<feature type="binding site" evidence="1">
    <location>
        <position position="46"/>
    </location>
    <ligand>
        <name>[2Fe-2S] cluster</name>
        <dbReference type="ChEBI" id="CHEBI:190135"/>
    </ligand>
</feature>
<feature type="binding site" evidence="1">
    <location>
        <position position="49"/>
    </location>
    <ligand>
        <name>[2Fe-2S] cluster</name>
        <dbReference type="ChEBI" id="CHEBI:190135"/>
    </ligand>
</feature>
<feature type="binding site" evidence="1">
    <location>
        <position position="81"/>
    </location>
    <ligand>
        <name>[2Fe-2S] cluster</name>
        <dbReference type="ChEBI" id="CHEBI:190135"/>
    </ligand>
</feature>
<reference key="1">
    <citation type="journal article" date="1991" name="FEBS Lett.">
        <title>Divergent evolution of chloroplast-type ferredoxins.</title>
        <authorList>
            <person name="Harayama S."/>
            <person name="Polissi A."/>
            <person name="Rekik M."/>
        </authorList>
    </citation>
    <scope>NUCLEOTIDE SEQUENCE [GENOMIC DNA]</scope>
</reference>
<gene>
    <name type="primary">xylT</name>
</gene>
<organism>
    <name type="scientific">Pseudomonas putida</name>
    <name type="common">Arthrobacter siderocapsulatus</name>
    <dbReference type="NCBI Taxonomy" id="303"/>
    <lineage>
        <taxon>Bacteria</taxon>
        <taxon>Pseudomonadati</taxon>
        <taxon>Pseudomonadota</taxon>
        <taxon>Gammaproteobacteria</taxon>
        <taxon>Pseudomonadales</taxon>
        <taxon>Pseudomonadaceae</taxon>
        <taxon>Pseudomonas</taxon>
    </lineage>
</organism>
<sequence>MNSAGYEVFEVLSGQSFRCAEGQSVLRAMEAQGKRCIPVGCRGGGCGLCRVRVLSGAYRSGRMSRGHVPAKAAAEALALACQVFPQTDLTIEYFRHVGGNKPDNMNYEEVTS</sequence>
<geneLocation type="plasmid">
    <name>TOL pWW0</name>
</geneLocation>
<name>FERX_PSEPU</name>
<keyword id="KW-0001">2Fe-2S</keyword>
<keyword id="KW-0058">Aromatic hydrocarbons catabolism</keyword>
<keyword id="KW-0249">Electron transport</keyword>
<keyword id="KW-0408">Iron</keyword>
<keyword id="KW-0411">Iron-sulfur</keyword>
<keyword id="KW-0479">Metal-binding</keyword>
<keyword id="KW-0614">Plasmid</keyword>
<keyword id="KW-0813">Transport</keyword>
<dbReference type="EMBL" id="X61467">
    <property type="protein sequence ID" value="CAA43702.1"/>
    <property type="molecule type" value="Genomic_DNA"/>
</dbReference>
<dbReference type="EMBL" id="M64747">
    <property type="protein sequence ID" value="AAA26051.1"/>
    <property type="molecule type" value="Genomic_DNA"/>
</dbReference>
<dbReference type="PIR" id="S16193">
    <property type="entry name" value="S16193"/>
</dbReference>
<dbReference type="RefSeq" id="NP_542867.1">
    <property type="nucleotide sequence ID" value="NC_003350.1"/>
</dbReference>
<dbReference type="RefSeq" id="WP_011005910.1">
    <property type="nucleotide sequence ID" value="NC_003350.1"/>
</dbReference>
<dbReference type="SMR" id="P23103"/>
<dbReference type="BRENDA" id="1.13.11.2">
    <property type="organism ID" value="5166"/>
</dbReference>
<dbReference type="UniPathway" id="UPA00750"/>
<dbReference type="GO" id="GO:0051537">
    <property type="term" value="F:2 iron, 2 sulfur cluster binding"/>
    <property type="evidence" value="ECO:0007669"/>
    <property type="project" value="UniProtKB-KW"/>
</dbReference>
<dbReference type="GO" id="GO:0046872">
    <property type="term" value="F:metal ion binding"/>
    <property type="evidence" value="ECO:0007669"/>
    <property type="project" value="UniProtKB-KW"/>
</dbReference>
<dbReference type="GO" id="GO:0019614">
    <property type="term" value="P:catechol-containing compound catabolic process"/>
    <property type="evidence" value="ECO:0007669"/>
    <property type="project" value="UniProtKB-UniPathway"/>
</dbReference>
<dbReference type="CDD" id="cd00207">
    <property type="entry name" value="fer2"/>
    <property type="match status" value="1"/>
</dbReference>
<dbReference type="Gene3D" id="3.10.20.30">
    <property type="match status" value="1"/>
</dbReference>
<dbReference type="InterPro" id="IPR036010">
    <property type="entry name" value="2Fe-2S_ferredoxin-like_sf"/>
</dbReference>
<dbReference type="InterPro" id="IPR001041">
    <property type="entry name" value="2Fe-2S_ferredoxin-type"/>
</dbReference>
<dbReference type="InterPro" id="IPR006058">
    <property type="entry name" value="2Fe2S_fd_BS"/>
</dbReference>
<dbReference type="InterPro" id="IPR012675">
    <property type="entry name" value="Beta-grasp_dom_sf"/>
</dbReference>
<dbReference type="Pfam" id="PF00111">
    <property type="entry name" value="Fer2"/>
    <property type="match status" value="1"/>
</dbReference>
<dbReference type="SUPFAM" id="SSF54292">
    <property type="entry name" value="2Fe-2S ferredoxin-like"/>
    <property type="match status" value="1"/>
</dbReference>
<dbReference type="PROSITE" id="PS00197">
    <property type="entry name" value="2FE2S_FER_1"/>
    <property type="match status" value="1"/>
</dbReference>
<dbReference type="PROSITE" id="PS51085">
    <property type="entry name" value="2FE2S_FER_2"/>
    <property type="match status" value="1"/>
</dbReference>
<proteinExistence type="inferred from homology"/>
<protein>
    <recommendedName>
        <fullName>Ferredoxin, plant-type</fullName>
    </recommendedName>
</protein>
<comment type="function">
    <text>Ferredoxins are iron-sulfur proteins that transfer electrons in a wide variety of metabolic reactions.</text>
</comment>
<comment type="pathway">
    <text>Aromatic compound metabolism; catechol degradation.</text>
</comment>
<comment type="similarity">
    <text evidence="2">Belongs to the 2Fe2S plant-type ferredoxin family.</text>
</comment>
<accession>P23103</accession>